<reference key="1">
    <citation type="submission" date="2005-10" db="EMBL/GenBank/DDBJ databases">
        <title>Complete sequence of chromosome 3 of Burkholderia sp. 383.</title>
        <authorList>
            <consortium name="US DOE Joint Genome Institute"/>
            <person name="Copeland A."/>
            <person name="Lucas S."/>
            <person name="Lapidus A."/>
            <person name="Barry K."/>
            <person name="Detter J.C."/>
            <person name="Glavina T."/>
            <person name="Hammon N."/>
            <person name="Israni S."/>
            <person name="Pitluck S."/>
            <person name="Chain P."/>
            <person name="Malfatti S."/>
            <person name="Shin M."/>
            <person name="Vergez L."/>
            <person name="Schmutz J."/>
            <person name="Larimer F."/>
            <person name="Land M."/>
            <person name="Kyrpides N."/>
            <person name="Lykidis A."/>
            <person name="Richardson P."/>
        </authorList>
    </citation>
    <scope>NUCLEOTIDE SEQUENCE [LARGE SCALE GENOMIC DNA]</scope>
    <source>
        <strain>ATCC 17760 / DSM 23089 / LMG 22485 / NCIMB 9086 / R18194 / 383</strain>
    </source>
</reference>
<name>HIS83_BURL3</name>
<sequence length="370" mass="40073">MQQPWKAVALSDLPLREDLKLQHAYGAPQLDVPVCLNVNENPYPPSPALVERIATAVADAARAANRYPDRDFAALRSHLAAYLTHDTGVTVDASSVWAANGSNEVIQQILQAFGGPGRSALAFTPAYPMYDEYCRTTFTRLHTLPRTEDFALDLNQALDSIRAHQPGVVLLTSPNNPTGTALPIDDIRAILDAAPGVVVVDEAYAEFRRHGVPSAVTLLPAYPRLIVTRTLSKAFKFAGGRVGYCACAPAIVEALKLVRLPYHLSAFTQAAACAALVARDEMLSQVEAIKAERDSTVDWLRGLGLTVADSDANFVMFGEFADRHRIWSGLLRRGVLIRESGPPPYLRVSIGTGAEMAAFRAALLDVMALE</sequence>
<feature type="chain" id="PRO_0000230210" description="Histidinol-phosphate aminotransferase 3">
    <location>
        <begin position="1"/>
        <end position="370"/>
    </location>
</feature>
<feature type="modified residue" description="N6-(pyridoxal phosphate)lysine" evidence="1">
    <location>
        <position position="233"/>
    </location>
</feature>
<evidence type="ECO:0000255" key="1">
    <source>
        <dbReference type="HAMAP-Rule" id="MF_01023"/>
    </source>
</evidence>
<gene>
    <name evidence="1" type="primary">hisC3</name>
    <name type="ordered locus">Bcep18194_C7445</name>
</gene>
<dbReference type="EC" id="2.6.1.9" evidence="1"/>
<dbReference type="EMBL" id="CP000150">
    <property type="protein sequence ID" value="ABB06489.1"/>
    <property type="molecule type" value="Genomic_DNA"/>
</dbReference>
<dbReference type="RefSeq" id="WP_011350132.1">
    <property type="nucleotide sequence ID" value="NC_007509.1"/>
</dbReference>
<dbReference type="SMR" id="Q39M27"/>
<dbReference type="GeneID" id="45092813"/>
<dbReference type="KEGG" id="bur:Bcep18194_C7445"/>
<dbReference type="PATRIC" id="fig|482957.22.peg.8042"/>
<dbReference type="HOGENOM" id="CLU_017584_3_1_4"/>
<dbReference type="UniPathway" id="UPA00031">
    <property type="reaction ID" value="UER00012"/>
</dbReference>
<dbReference type="Proteomes" id="UP000002705">
    <property type="component" value="Chromosome 3"/>
</dbReference>
<dbReference type="GO" id="GO:0004400">
    <property type="term" value="F:histidinol-phosphate transaminase activity"/>
    <property type="evidence" value="ECO:0007669"/>
    <property type="project" value="UniProtKB-UniRule"/>
</dbReference>
<dbReference type="GO" id="GO:0030170">
    <property type="term" value="F:pyridoxal phosphate binding"/>
    <property type="evidence" value="ECO:0007669"/>
    <property type="project" value="InterPro"/>
</dbReference>
<dbReference type="GO" id="GO:0000105">
    <property type="term" value="P:L-histidine biosynthetic process"/>
    <property type="evidence" value="ECO:0007669"/>
    <property type="project" value="UniProtKB-UniRule"/>
</dbReference>
<dbReference type="CDD" id="cd00609">
    <property type="entry name" value="AAT_like"/>
    <property type="match status" value="1"/>
</dbReference>
<dbReference type="Gene3D" id="3.90.1150.10">
    <property type="entry name" value="Aspartate Aminotransferase, domain 1"/>
    <property type="match status" value="1"/>
</dbReference>
<dbReference type="Gene3D" id="3.40.640.10">
    <property type="entry name" value="Type I PLP-dependent aspartate aminotransferase-like (Major domain)"/>
    <property type="match status" value="1"/>
</dbReference>
<dbReference type="HAMAP" id="MF_01023">
    <property type="entry name" value="HisC_aminotrans_2"/>
    <property type="match status" value="1"/>
</dbReference>
<dbReference type="InterPro" id="IPR004839">
    <property type="entry name" value="Aminotransferase_I/II_large"/>
</dbReference>
<dbReference type="InterPro" id="IPR005861">
    <property type="entry name" value="HisP_aminotrans"/>
</dbReference>
<dbReference type="InterPro" id="IPR015424">
    <property type="entry name" value="PyrdxlP-dep_Trfase"/>
</dbReference>
<dbReference type="InterPro" id="IPR015421">
    <property type="entry name" value="PyrdxlP-dep_Trfase_major"/>
</dbReference>
<dbReference type="InterPro" id="IPR015422">
    <property type="entry name" value="PyrdxlP-dep_Trfase_small"/>
</dbReference>
<dbReference type="NCBIfam" id="TIGR01141">
    <property type="entry name" value="hisC"/>
    <property type="match status" value="1"/>
</dbReference>
<dbReference type="NCBIfam" id="NF002877">
    <property type="entry name" value="PRK03317.1"/>
    <property type="match status" value="1"/>
</dbReference>
<dbReference type="PANTHER" id="PTHR42885:SF2">
    <property type="entry name" value="HISTIDINOL-PHOSPHATE AMINOTRANSFERASE"/>
    <property type="match status" value="1"/>
</dbReference>
<dbReference type="PANTHER" id="PTHR42885">
    <property type="entry name" value="HISTIDINOL-PHOSPHATE AMINOTRANSFERASE-RELATED"/>
    <property type="match status" value="1"/>
</dbReference>
<dbReference type="Pfam" id="PF00155">
    <property type="entry name" value="Aminotran_1_2"/>
    <property type="match status" value="1"/>
</dbReference>
<dbReference type="SUPFAM" id="SSF53383">
    <property type="entry name" value="PLP-dependent transferases"/>
    <property type="match status" value="1"/>
</dbReference>
<comment type="catalytic activity">
    <reaction evidence="1">
        <text>L-histidinol phosphate + 2-oxoglutarate = 3-(imidazol-4-yl)-2-oxopropyl phosphate + L-glutamate</text>
        <dbReference type="Rhea" id="RHEA:23744"/>
        <dbReference type="ChEBI" id="CHEBI:16810"/>
        <dbReference type="ChEBI" id="CHEBI:29985"/>
        <dbReference type="ChEBI" id="CHEBI:57766"/>
        <dbReference type="ChEBI" id="CHEBI:57980"/>
        <dbReference type="EC" id="2.6.1.9"/>
    </reaction>
</comment>
<comment type="cofactor">
    <cofactor evidence="1">
        <name>pyridoxal 5'-phosphate</name>
        <dbReference type="ChEBI" id="CHEBI:597326"/>
    </cofactor>
</comment>
<comment type="pathway">
    <text evidence="1">Amino-acid biosynthesis; L-histidine biosynthesis; L-histidine from 5-phospho-alpha-D-ribose 1-diphosphate: step 7/9.</text>
</comment>
<comment type="subunit">
    <text evidence="1">Homodimer.</text>
</comment>
<comment type="similarity">
    <text evidence="1">Belongs to the class-II pyridoxal-phosphate-dependent aminotransferase family. Histidinol-phosphate aminotransferase subfamily.</text>
</comment>
<proteinExistence type="inferred from homology"/>
<protein>
    <recommendedName>
        <fullName evidence="1">Histidinol-phosphate aminotransferase 3</fullName>
        <ecNumber evidence="1">2.6.1.9</ecNumber>
    </recommendedName>
    <alternativeName>
        <fullName evidence="1">Imidazole acetol-phosphate transaminase 3</fullName>
    </alternativeName>
</protein>
<accession>Q39M27</accession>
<organism>
    <name type="scientific">Burkholderia lata (strain ATCC 17760 / DSM 23089 / LMG 22485 / NCIMB 9086 / R18194 / 383)</name>
    <dbReference type="NCBI Taxonomy" id="482957"/>
    <lineage>
        <taxon>Bacteria</taxon>
        <taxon>Pseudomonadati</taxon>
        <taxon>Pseudomonadota</taxon>
        <taxon>Betaproteobacteria</taxon>
        <taxon>Burkholderiales</taxon>
        <taxon>Burkholderiaceae</taxon>
        <taxon>Burkholderia</taxon>
        <taxon>Burkholderia cepacia complex</taxon>
    </lineage>
</organism>
<keyword id="KW-0028">Amino-acid biosynthesis</keyword>
<keyword id="KW-0032">Aminotransferase</keyword>
<keyword id="KW-0368">Histidine biosynthesis</keyword>
<keyword id="KW-0663">Pyridoxal phosphate</keyword>
<keyword id="KW-0808">Transferase</keyword>